<name>ARCL_MYCPN</name>
<evidence type="ECO:0000256" key="1">
    <source>
        <dbReference type="SAM" id="MobiDB-lite"/>
    </source>
</evidence>
<evidence type="ECO:0000305" key="2"/>
<keyword id="KW-0418">Kinase</keyword>
<keyword id="KW-1185">Reference proteome</keyword>
<keyword id="KW-0808">Transferase</keyword>
<proteinExistence type="inferred from homology"/>
<accession>P78030</accession>
<feature type="chain" id="PRO_0000185145" description="Carbamate kinase-like protein">
    <location>
        <begin position="1"/>
        <end position="309"/>
    </location>
</feature>
<feature type="region of interest" description="Disordered" evidence="1">
    <location>
        <begin position="125"/>
        <end position="144"/>
    </location>
</feature>
<reference key="1">
    <citation type="journal article" date="1996" name="Nucleic Acids Res.">
        <title>Complete sequence analysis of the genome of the bacterium Mycoplasma pneumoniae.</title>
        <authorList>
            <person name="Himmelreich R."/>
            <person name="Hilbert H."/>
            <person name="Plagens H."/>
            <person name="Pirkl E."/>
            <person name="Li B.-C."/>
            <person name="Herrmann R."/>
        </authorList>
    </citation>
    <scope>NUCLEOTIDE SEQUENCE [LARGE SCALE GENOMIC DNA]</scope>
    <source>
        <strain>ATCC 29342 / M129 / Subtype 1</strain>
    </source>
</reference>
<reference key="2">
    <citation type="journal article" date="1997" name="J. Bacteriol.">
        <title>Transposon mutagenesis reinforces the correlation between Mycoplasma pneumoniae cytoskeletal protein HMW2 and cytadherence.</title>
        <authorList>
            <person name="Krause D.C."/>
            <person name="Proft T."/>
            <person name="Hedreyda C.T."/>
            <person name="Hilbert H."/>
            <person name="Plagens H."/>
            <person name="Herrmann R."/>
        </authorList>
    </citation>
    <scope>NUCLEOTIDE SEQUENCE [GENOMIC DNA]</scope>
    <source>
        <strain>ATCC 29342 / M129 / Subtype 1</strain>
    </source>
</reference>
<comment type="similarity">
    <text evidence="2">Belongs to the carbamate kinase family.</text>
</comment>
<protein>
    <recommendedName>
        <fullName>Carbamate kinase-like protein</fullName>
    </recommendedName>
</protein>
<organism>
    <name type="scientific">Mycoplasma pneumoniae (strain ATCC 29342 / M129 / Subtype 1)</name>
    <name type="common">Mycoplasmoides pneumoniae</name>
    <dbReference type="NCBI Taxonomy" id="272634"/>
    <lineage>
        <taxon>Bacteria</taxon>
        <taxon>Bacillati</taxon>
        <taxon>Mycoplasmatota</taxon>
        <taxon>Mycoplasmoidales</taxon>
        <taxon>Mycoplasmoidaceae</taxon>
        <taxon>Mycoplasmoides</taxon>
    </lineage>
</organism>
<gene>
    <name type="ordered locus">MPN_307</name>
    <name type="ORF">F10_orf309</name>
    <name type="ORF">MP529</name>
</gene>
<dbReference type="EMBL" id="U00089">
    <property type="protein sequence ID" value="AAB96177.1"/>
    <property type="molecule type" value="Genomic_DNA"/>
</dbReference>
<dbReference type="EMBL" id="U59896">
    <property type="protein sequence ID" value="AAB52524.1"/>
    <property type="molecule type" value="Genomic_DNA"/>
</dbReference>
<dbReference type="PIR" id="S73855">
    <property type="entry name" value="S73855"/>
</dbReference>
<dbReference type="RefSeq" id="NP_109995.1">
    <property type="nucleotide sequence ID" value="NC_000912.1"/>
</dbReference>
<dbReference type="SMR" id="P78030"/>
<dbReference type="IntAct" id="P78030">
    <property type="interactions" value="2"/>
</dbReference>
<dbReference type="STRING" id="272634.MPN_307"/>
<dbReference type="EnsemblBacteria" id="AAB96177">
    <property type="protein sequence ID" value="AAB96177"/>
    <property type="gene ID" value="MPN_307"/>
</dbReference>
<dbReference type="KEGG" id="mpn:MPN_307"/>
<dbReference type="PATRIC" id="fig|272634.6.peg.331"/>
<dbReference type="HOGENOM" id="CLU_076278_0_0_14"/>
<dbReference type="OrthoDB" id="9766717at2"/>
<dbReference type="BioCyc" id="MPNE272634:G1GJ3-487-MONOMER"/>
<dbReference type="Proteomes" id="UP000000808">
    <property type="component" value="Chromosome"/>
</dbReference>
<dbReference type="GO" id="GO:0005829">
    <property type="term" value="C:cytosol"/>
    <property type="evidence" value="ECO:0007669"/>
    <property type="project" value="TreeGrafter"/>
</dbReference>
<dbReference type="GO" id="GO:0008804">
    <property type="term" value="F:carbamate kinase activity"/>
    <property type="evidence" value="ECO:0007669"/>
    <property type="project" value="InterPro"/>
</dbReference>
<dbReference type="GO" id="GO:0019546">
    <property type="term" value="P:arginine deiminase pathway"/>
    <property type="evidence" value="ECO:0007669"/>
    <property type="project" value="TreeGrafter"/>
</dbReference>
<dbReference type="CDD" id="cd04235">
    <property type="entry name" value="AAK_CK"/>
    <property type="match status" value="1"/>
</dbReference>
<dbReference type="Gene3D" id="3.40.1160.10">
    <property type="entry name" value="Acetylglutamate kinase-like"/>
    <property type="match status" value="1"/>
</dbReference>
<dbReference type="InterPro" id="IPR036393">
    <property type="entry name" value="AceGlu_kinase-like_sf"/>
</dbReference>
<dbReference type="InterPro" id="IPR001048">
    <property type="entry name" value="Asp/Glu/Uridylate_kinase"/>
</dbReference>
<dbReference type="InterPro" id="IPR003964">
    <property type="entry name" value="Carb_kinase"/>
</dbReference>
<dbReference type="NCBIfam" id="NF009007">
    <property type="entry name" value="PRK12352.1"/>
    <property type="match status" value="1"/>
</dbReference>
<dbReference type="PANTHER" id="PTHR30409">
    <property type="entry name" value="CARBAMATE KINASE"/>
    <property type="match status" value="1"/>
</dbReference>
<dbReference type="PANTHER" id="PTHR30409:SF1">
    <property type="entry name" value="CARBAMATE KINASE-RELATED"/>
    <property type="match status" value="1"/>
</dbReference>
<dbReference type="Pfam" id="PF00696">
    <property type="entry name" value="AA_kinase"/>
    <property type="match status" value="1"/>
</dbReference>
<dbReference type="PIRSF" id="PIRSF000723">
    <property type="entry name" value="Carbamate_kin"/>
    <property type="match status" value="1"/>
</dbReference>
<dbReference type="PRINTS" id="PR01469">
    <property type="entry name" value="CARBMTKINASE"/>
</dbReference>
<dbReference type="SUPFAM" id="SSF53633">
    <property type="entry name" value="Carbamate kinase-like"/>
    <property type="match status" value="1"/>
</dbReference>
<sequence>MQKIVIALGGNALGNNPTEQKDLVQLPARQAVALLKQGYQILLGHGNGPQVGMIYNAFSAAKQVNPNTPTVPFAESGAMSQGYIGLHLLTALYNELLHQKLPHQAVYFLTQTLVEASDPAFQNPNKPVGPFYNTEETARSANPNSTVVEDAGRGWRKVVASPKPVDVLGIDAIKSSFNQGNLVIVGGGGGVPTIKTKSGYATVDGVIDKDLALSEIAIKVEADLFVILTAVDFVYINYGQPNEQKLTCINTKEAKTLMAANQFAKGSMLPKVEACLNFVQSGTNKTAIIAQLDQLAAAIAGKIGTKIVK</sequence>